<name>Y1207_METJA</name>
<reference key="1">
    <citation type="journal article" date="1996" name="Science">
        <title>Complete genome sequence of the methanogenic archaeon, Methanococcus jannaschii.</title>
        <authorList>
            <person name="Bult C.J."/>
            <person name="White O."/>
            <person name="Olsen G.J."/>
            <person name="Zhou L."/>
            <person name="Fleischmann R.D."/>
            <person name="Sutton G.G."/>
            <person name="Blake J.A."/>
            <person name="FitzGerald L.M."/>
            <person name="Clayton R.A."/>
            <person name="Gocayne J.D."/>
            <person name="Kerlavage A.R."/>
            <person name="Dougherty B.A."/>
            <person name="Tomb J.-F."/>
            <person name="Adams M.D."/>
            <person name="Reich C.I."/>
            <person name="Overbeek R."/>
            <person name="Kirkness E.F."/>
            <person name="Weinstock K.G."/>
            <person name="Merrick J.M."/>
            <person name="Glodek A."/>
            <person name="Scott J.L."/>
            <person name="Geoghagen N.S.M."/>
            <person name="Weidman J.F."/>
            <person name="Fuhrmann J.L."/>
            <person name="Nguyen D."/>
            <person name="Utterback T.R."/>
            <person name="Kelley J.M."/>
            <person name="Peterson J.D."/>
            <person name="Sadow P.W."/>
            <person name="Hanna M.C."/>
            <person name="Cotton M.D."/>
            <person name="Roberts K.M."/>
            <person name="Hurst M.A."/>
            <person name="Kaine B.P."/>
            <person name="Borodovsky M."/>
            <person name="Klenk H.-P."/>
            <person name="Fraser C.M."/>
            <person name="Smith H.O."/>
            <person name="Woese C.R."/>
            <person name="Venter J.C."/>
        </authorList>
    </citation>
    <scope>NUCLEOTIDE SEQUENCE [LARGE SCALE GENOMIC DNA]</scope>
    <source>
        <strain>ATCC 43067 / DSM 2661 / JAL-1 / JCM 10045 / NBRC 100440</strain>
    </source>
</reference>
<comment type="similarity">
    <text evidence="2">Belongs to the acetyltransferase family.</text>
</comment>
<gene>
    <name type="ordered locus">MJ1207</name>
</gene>
<organism>
    <name type="scientific">Methanocaldococcus jannaschii (strain ATCC 43067 / DSM 2661 / JAL-1 / JCM 10045 / NBRC 100440)</name>
    <name type="common">Methanococcus jannaschii</name>
    <dbReference type="NCBI Taxonomy" id="243232"/>
    <lineage>
        <taxon>Archaea</taxon>
        <taxon>Methanobacteriati</taxon>
        <taxon>Methanobacteriota</taxon>
        <taxon>Methanomada group</taxon>
        <taxon>Methanococci</taxon>
        <taxon>Methanococcales</taxon>
        <taxon>Methanocaldococcaceae</taxon>
        <taxon>Methanocaldococcus</taxon>
    </lineage>
</organism>
<proteinExistence type="inferred from homology"/>
<accession>Q58604</accession>
<evidence type="ECO:0000255" key="1">
    <source>
        <dbReference type="PROSITE-ProRule" id="PRU00532"/>
    </source>
</evidence>
<evidence type="ECO:0000305" key="2"/>
<feature type="chain" id="PRO_0000074630" description="Uncharacterized N-acetyltransferase MJ1207">
    <location>
        <begin position="1"/>
        <end position="226"/>
    </location>
</feature>
<feature type="domain" description="N-acetyltransferase" evidence="1">
    <location>
        <begin position="75"/>
        <end position="226"/>
    </location>
</feature>
<keyword id="KW-0012">Acyltransferase</keyword>
<keyword id="KW-1185">Reference proteome</keyword>
<keyword id="KW-0808">Transferase</keyword>
<protein>
    <recommendedName>
        <fullName>Uncharacterized N-acetyltransferase MJ1207</fullName>
        <ecNumber>2.3.1.-</ecNumber>
    </recommendedName>
</protein>
<sequence>MRVQLILHLEIPKEVCRSLEVDNYINNSIEINLKCEKKPTLYIKTHSIGSLKSILDDFFRCQNAAMEVYNLIKTYTIRNVTKDDLDDFLELYFKAYRGFDKYYYKKKKWARWYFKWLMKRDEDGFFVCEVNGKPVGFVACDCNWISNIEKREVAEIHEIFVDPDFRGRGIGTALINKAIEYAKKRGRRIVELWVGVENKGAIEFYKRLGFEEKEVVKGWLRMVKRI</sequence>
<dbReference type="EC" id="2.3.1.-"/>
<dbReference type="EMBL" id="L77117">
    <property type="protein sequence ID" value="AAB99211.1"/>
    <property type="molecule type" value="Genomic_DNA"/>
</dbReference>
<dbReference type="PIR" id="F64450">
    <property type="entry name" value="F64450"/>
</dbReference>
<dbReference type="RefSeq" id="WP_010870719.1">
    <property type="nucleotide sequence ID" value="NC_000909.1"/>
</dbReference>
<dbReference type="SMR" id="Q58604"/>
<dbReference type="FunCoup" id="Q58604">
    <property type="interactions" value="2"/>
</dbReference>
<dbReference type="STRING" id="243232.MJ_1207"/>
<dbReference type="PaxDb" id="243232-MJ_1207"/>
<dbReference type="DNASU" id="1452104"/>
<dbReference type="EnsemblBacteria" id="AAB99211">
    <property type="protein sequence ID" value="AAB99211"/>
    <property type="gene ID" value="MJ_1207"/>
</dbReference>
<dbReference type="GeneID" id="1452104"/>
<dbReference type="KEGG" id="mja:MJ_1207"/>
<dbReference type="eggNOG" id="arCOG00826">
    <property type="taxonomic scope" value="Archaea"/>
</dbReference>
<dbReference type="eggNOG" id="arCOG01354">
    <property type="taxonomic scope" value="Archaea"/>
</dbReference>
<dbReference type="HOGENOM" id="CLU_013985_36_0_2"/>
<dbReference type="InParanoid" id="Q58604"/>
<dbReference type="OrthoDB" id="38613at2157"/>
<dbReference type="PhylomeDB" id="Q58604"/>
<dbReference type="Proteomes" id="UP000000805">
    <property type="component" value="Chromosome"/>
</dbReference>
<dbReference type="GO" id="GO:0016747">
    <property type="term" value="F:acyltransferase activity, transferring groups other than amino-acyl groups"/>
    <property type="evidence" value="ECO:0007669"/>
    <property type="project" value="InterPro"/>
</dbReference>
<dbReference type="CDD" id="cd04301">
    <property type="entry name" value="NAT_SF"/>
    <property type="match status" value="1"/>
</dbReference>
<dbReference type="FunFam" id="3.40.630.30:FF:000282">
    <property type="entry name" value="GCN5-related N-acetyltransferase"/>
    <property type="match status" value="1"/>
</dbReference>
<dbReference type="Gene3D" id="3.40.630.30">
    <property type="match status" value="1"/>
</dbReference>
<dbReference type="InterPro" id="IPR016181">
    <property type="entry name" value="Acyl_CoA_acyltransferase"/>
</dbReference>
<dbReference type="InterPro" id="IPR050832">
    <property type="entry name" value="Bact_Acetyltransf"/>
</dbReference>
<dbReference type="InterPro" id="IPR000182">
    <property type="entry name" value="GNAT_dom"/>
</dbReference>
<dbReference type="NCBIfam" id="NF011470">
    <property type="entry name" value="PRK14887.1"/>
    <property type="match status" value="1"/>
</dbReference>
<dbReference type="PANTHER" id="PTHR43877:SF2">
    <property type="entry name" value="AMINOALKYLPHOSPHONATE N-ACETYLTRANSFERASE-RELATED"/>
    <property type="match status" value="1"/>
</dbReference>
<dbReference type="PANTHER" id="PTHR43877">
    <property type="entry name" value="AMINOALKYLPHOSPHONATE N-ACETYLTRANSFERASE-RELATED-RELATED"/>
    <property type="match status" value="1"/>
</dbReference>
<dbReference type="Pfam" id="PF00583">
    <property type="entry name" value="Acetyltransf_1"/>
    <property type="match status" value="1"/>
</dbReference>
<dbReference type="SUPFAM" id="SSF55729">
    <property type="entry name" value="Acyl-CoA N-acyltransferases (Nat)"/>
    <property type="match status" value="1"/>
</dbReference>
<dbReference type="PROSITE" id="PS51186">
    <property type="entry name" value="GNAT"/>
    <property type="match status" value="1"/>
</dbReference>